<comment type="function">
    <text evidence="1">One of three proteins encoded by transposon Tn554 required for its transposition.</text>
</comment>
<dbReference type="EMBL" id="BA000017">
    <property type="protein sequence ID" value="BAB56216.1"/>
    <property type="molecule type" value="Genomic_DNA"/>
</dbReference>
<dbReference type="EMBL" id="BA000017">
    <property type="protein sequence ID" value="BAB57819.1"/>
    <property type="molecule type" value="Genomic_DNA"/>
</dbReference>
<dbReference type="RefSeq" id="WP_000361059.1">
    <property type="nucleotide sequence ID" value="NC_002758.2"/>
</dbReference>
<dbReference type="SMR" id="P0A047"/>
<dbReference type="KEGG" id="sav:SAV0054"/>
<dbReference type="KEGG" id="sav:SAV1657"/>
<dbReference type="HOGENOM" id="CLU_135503_0_0_9"/>
<dbReference type="Proteomes" id="UP000002481">
    <property type="component" value="Chromosome"/>
</dbReference>
<dbReference type="GO" id="GO:0003677">
    <property type="term" value="F:DNA binding"/>
    <property type="evidence" value="ECO:0007669"/>
    <property type="project" value="UniProtKB-KW"/>
</dbReference>
<dbReference type="GO" id="GO:0006310">
    <property type="term" value="P:DNA recombination"/>
    <property type="evidence" value="ECO:0007669"/>
    <property type="project" value="UniProtKB-KW"/>
</dbReference>
<dbReference type="GO" id="GO:0032196">
    <property type="term" value="P:transposition"/>
    <property type="evidence" value="ECO:0007669"/>
    <property type="project" value="UniProtKB-KW"/>
</dbReference>
<dbReference type="InterPro" id="IPR046229">
    <property type="entry name" value="TnpC-like"/>
</dbReference>
<dbReference type="Pfam" id="PF19776">
    <property type="entry name" value="DUF6262"/>
    <property type="match status" value="1"/>
</dbReference>
<name>TRAC_STAAM</name>
<gene>
    <name type="primary">tnpC1</name>
    <name type="ordered locus">SAV0054</name>
</gene>
<gene>
    <name type="primary">tnpC2</name>
    <name type="ordered locus">SAV1657</name>
</gene>
<evidence type="ECO:0000250" key="1"/>
<sequence length="125" mass="14804">MDKQVRNTTEIVRLAKQKSKKTREKVDKAISKFSIEGKVINFNSIAKEANVSKSWLYKEHDIRQRIESLRERQITANVVSKPKKSSRSEEILIKTLKRRVMELEKENKKLQNQIQKLYGDLYNKE</sequence>
<proteinExistence type="inferred from homology"/>
<organism>
    <name type="scientific">Staphylococcus aureus (strain Mu50 / ATCC 700699)</name>
    <dbReference type="NCBI Taxonomy" id="158878"/>
    <lineage>
        <taxon>Bacteria</taxon>
        <taxon>Bacillati</taxon>
        <taxon>Bacillota</taxon>
        <taxon>Bacilli</taxon>
        <taxon>Bacillales</taxon>
        <taxon>Staphylococcaceae</taxon>
        <taxon>Staphylococcus</taxon>
    </lineage>
</organism>
<keyword id="KW-0233">DNA recombination</keyword>
<keyword id="KW-0238">DNA-binding</keyword>
<keyword id="KW-0814">Transposable element</keyword>
<keyword id="KW-0815">Transposition</keyword>
<protein>
    <recommendedName>
        <fullName>Transposase for transposon Tn554</fullName>
    </recommendedName>
</protein>
<reference key="1">
    <citation type="journal article" date="2001" name="Lancet">
        <title>Whole genome sequencing of meticillin-resistant Staphylococcus aureus.</title>
        <authorList>
            <person name="Kuroda M."/>
            <person name="Ohta T."/>
            <person name="Uchiyama I."/>
            <person name="Baba T."/>
            <person name="Yuzawa H."/>
            <person name="Kobayashi I."/>
            <person name="Cui L."/>
            <person name="Oguchi A."/>
            <person name="Aoki K."/>
            <person name="Nagai Y."/>
            <person name="Lian J.-Q."/>
            <person name="Ito T."/>
            <person name="Kanamori M."/>
            <person name="Matsumaru H."/>
            <person name="Maruyama A."/>
            <person name="Murakami H."/>
            <person name="Hosoyama A."/>
            <person name="Mizutani-Ui Y."/>
            <person name="Takahashi N.K."/>
            <person name="Sawano T."/>
            <person name="Inoue R."/>
            <person name="Kaito C."/>
            <person name="Sekimizu K."/>
            <person name="Hirakawa H."/>
            <person name="Kuhara S."/>
            <person name="Goto S."/>
            <person name="Yabuzaki J."/>
            <person name="Kanehisa M."/>
            <person name="Yamashita A."/>
            <person name="Oshima K."/>
            <person name="Furuya K."/>
            <person name="Yoshino C."/>
            <person name="Shiba T."/>
            <person name="Hattori M."/>
            <person name="Ogasawara N."/>
            <person name="Hayashi H."/>
            <person name="Hiramatsu K."/>
        </authorList>
    </citation>
    <scope>NUCLEOTIDE SEQUENCE [LARGE SCALE GENOMIC DNA]</scope>
    <source>
        <strain>Mu50 / ATCC 700699</strain>
    </source>
</reference>
<accession>P0A047</accession>
<accession>P06698</accession>
<feature type="chain" id="PRO_0000075440" description="Transposase for transposon Tn554">
    <location>
        <begin position="1"/>
        <end position="125"/>
    </location>
</feature>